<proteinExistence type="evidence at transcript level"/>
<organism>
    <name type="scientific">Arabidopsis thaliana</name>
    <name type="common">Mouse-ear cress</name>
    <dbReference type="NCBI Taxonomy" id="3702"/>
    <lineage>
        <taxon>Eukaryota</taxon>
        <taxon>Viridiplantae</taxon>
        <taxon>Streptophyta</taxon>
        <taxon>Embryophyta</taxon>
        <taxon>Tracheophyta</taxon>
        <taxon>Spermatophyta</taxon>
        <taxon>Magnoliopsida</taxon>
        <taxon>eudicotyledons</taxon>
        <taxon>Gunneridae</taxon>
        <taxon>Pentapetalae</taxon>
        <taxon>rosids</taxon>
        <taxon>malvids</taxon>
        <taxon>Brassicales</taxon>
        <taxon>Brassicaceae</taxon>
        <taxon>Camelineae</taxon>
        <taxon>Arabidopsis</taxon>
    </lineage>
</organism>
<reference key="1">
    <citation type="journal article" date="2000" name="Nature">
        <title>Sequence and analysis of chromosome 3 of the plant Arabidopsis thaliana.</title>
        <authorList>
            <person name="Salanoubat M."/>
            <person name="Lemcke K."/>
            <person name="Rieger M."/>
            <person name="Ansorge W."/>
            <person name="Unseld M."/>
            <person name="Fartmann B."/>
            <person name="Valle G."/>
            <person name="Bloecker H."/>
            <person name="Perez-Alonso M."/>
            <person name="Obermaier B."/>
            <person name="Delseny M."/>
            <person name="Boutry M."/>
            <person name="Grivell L.A."/>
            <person name="Mache R."/>
            <person name="Puigdomenech P."/>
            <person name="De Simone V."/>
            <person name="Choisne N."/>
            <person name="Artiguenave F."/>
            <person name="Robert C."/>
            <person name="Brottier P."/>
            <person name="Wincker P."/>
            <person name="Cattolico L."/>
            <person name="Weissenbach J."/>
            <person name="Saurin W."/>
            <person name="Quetier F."/>
            <person name="Schaefer M."/>
            <person name="Mueller-Auer S."/>
            <person name="Gabel C."/>
            <person name="Fuchs M."/>
            <person name="Benes V."/>
            <person name="Wurmbach E."/>
            <person name="Drzonek H."/>
            <person name="Erfle H."/>
            <person name="Jordan N."/>
            <person name="Bangert S."/>
            <person name="Wiedelmann R."/>
            <person name="Kranz H."/>
            <person name="Voss H."/>
            <person name="Holland R."/>
            <person name="Brandt P."/>
            <person name="Nyakatura G."/>
            <person name="Vezzi A."/>
            <person name="D'Angelo M."/>
            <person name="Pallavicini A."/>
            <person name="Toppo S."/>
            <person name="Simionati B."/>
            <person name="Conrad A."/>
            <person name="Hornischer K."/>
            <person name="Kauer G."/>
            <person name="Loehnert T.-H."/>
            <person name="Nordsiek G."/>
            <person name="Reichelt J."/>
            <person name="Scharfe M."/>
            <person name="Schoen O."/>
            <person name="Bargues M."/>
            <person name="Terol J."/>
            <person name="Climent J."/>
            <person name="Navarro P."/>
            <person name="Collado C."/>
            <person name="Perez-Perez A."/>
            <person name="Ottenwaelder B."/>
            <person name="Duchemin D."/>
            <person name="Cooke R."/>
            <person name="Laudie M."/>
            <person name="Berger-Llauro C."/>
            <person name="Purnelle B."/>
            <person name="Masuy D."/>
            <person name="de Haan M."/>
            <person name="Maarse A.C."/>
            <person name="Alcaraz J.-P."/>
            <person name="Cottet A."/>
            <person name="Casacuberta E."/>
            <person name="Monfort A."/>
            <person name="Argiriou A."/>
            <person name="Flores M."/>
            <person name="Liguori R."/>
            <person name="Vitale D."/>
            <person name="Mannhaupt G."/>
            <person name="Haase D."/>
            <person name="Schoof H."/>
            <person name="Rudd S."/>
            <person name="Zaccaria P."/>
            <person name="Mewes H.-W."/>
            <person name="Mayer K.F.X."/>
            <person name="Kaul S."/>
            <person name="Town C.D."/>
            <person name="Koo H.L."/>
            <person name="Tallon L.J."/>
            <person name="Jenkins J."/>
            <person name="Rooney T."/>
            <person name="Rizzo M."/>
            <person name="Walts A."/>
            <person name="Utterback T."/>
            <person name="Fujii C.Y."/>
            <person name="Shea T.P."/>
            <person name="Creasy T.H."/>
            <person name="Haas B."/>
            <person name="Maiti R."/>
            <person name="Wu D."/>
            <person name="Peterson J."/>
            <person name="Van Aken S."/>
            <person name="Pai G."/>
            <person name="Militscher J."/>
            <person name="Sellers P."/>
            <person name="Gill J.E."/>
            <person name="Feldblyum T.V."/>
            <person name="Preuss D."/>
            <person name="Lin X."/>
            <person name="Nierman W.C."/>
            <person name="Salzberg S.L."/>
            <person name="White O."/>
            <person name="Venter J.C."/>
            <person name="Fraser C.M."/>
            <person name="Kaneko T."/>
            <person name="Nakamura Y."/>
            <person name="Sato S."/>
            <person name="Kato T."/>
            <person name="Asamizu E."/>
            <person name="Sasamoto S."/>
            <person name="Kimura T."/>
            <person name="Idesawa K."/>
            <person name="Kawashima K."/>
            <person name="Kishida Y."/>
            <person name="Kiyokawa C."/>
            <person name="Kohara M."/>
            <person name="Matsumoto M."/>
            <person name="Matsuno A."/>
            <person name="Muraki A."/>
            <person name="Nakayama S."/>
            <person name="Nakazaki N."/>
            <person name="Shinpo S."/>
            <person name="Takeuchi C."/>
            <person name="Wada T."/>
            <person name="Watanabe A."/>
            <person name="Yamada M."/>
            <person name="Yasuda M."/>
            <person name="Tabata S."/>
        </authorList>
    </citation>
    <scope>NUCLEOTIDE SEQUENCE [LARGE SCALE GENOMIC DNA]</scope>
    <source>
        <strain>cv. Columbia</strain>
    </source>
</reference>
<reference key="2">
    <citation type="journal article" date="2017" name="Plant J.">
        <title>Araport11: a complete reannotation of the Arabidopsis thaliana reference genome.</title>
        <authorList>
            <person name="Cheng C.Y."/>
            <person name="Krishnakumar V."/>
            <person name="Chan A.P."/>
            <person name="Thibaud-Nissen F."/>
            <person name="Schobel S."/>
            <person name="Town C.D."/>
        </authorList>
    </citation>
    <scope>GENOME REANNOTATION</scope>
    <source>
        <strain>cv. Columbia</strain>
    </source>
</reference>
<reference key="3">
    <citation type="journal article" date="2002" name="Science">
        <title>Functional annotation of a full-length Arabidopsis cDNA collection.</title>
        <authorList>
            <person name="Seki M."/>
            <person name="Narusaka M."/>
            <person name="Kamiya A."/>
            <person name="Ishida J."/>
            <person name="Satou M."/>
            <person name="Sakurai T."/>
            <person name="Nakajima M."/>
            <person name="Enju A."/>
            <person name="Akiyama K."/>
            <person name="Oono Y."/>
            <person name="Muramatsu M."/>
            <person name="Hayashizaki Y."/>
            <person name="Kawai J."/>
            <person name="Carninci P."/>
            <person name="Itoh M."/>
            <person name="Ishii Y."/>
            <person name="Arakawa T."/>
            <person name="Shibata K."/>
            <person name="Shinagawa A."/>
            <person name="Shinozaki K."/>
        </authorList>
    </citation>
    <scope>NUCLEOTIDE SEQUENCE [LARGE SCALE MRNA]</scope>
    <source>
        <strain>cv. Columbia</strain>
    </source>
</reference>
<reference key="4">
    <citation type="submission" date="2006-06" db="EMBL/GenBank/DDBJ databases">
        <title>Arabidopsis ORF clones.</title>
        <authorList>
            <person name="Quinitio C."/>
            <person name="Chen H."/>
            <person name="Kim C.J."/>
            <person name="Shinn P."/>
            <person name="Ecker J.R."/>
        </authorList>
    </citation>
    <scope>NUCLEOTIDE SEQUENCE [LARGE SCALE MRNA]</scope>
    <source>
        <strain>cv. Columbia</strain>
    </source>
</reference>
<reference key="5">
    <citation type="submission" date="2002-03" db="EMBL/GenBank/DDBJ databases">
        <title>Full-length cDNA from Arabidopsis thaliana.</title>
        <authorList>
            <person name="Brover V.V."/>
            <person name="Troukhan M.E."/>
            <person name="Alexandrov N.A."/>
            <person name="Lu Y.-P."/>
            <person name="Flavell R.B."/>
            <person name="Feldmann K.A."/>
        </authorList>
    </citation>
    <scope>NUCLEOTIDE SEQUENCE [LARGE SCALE MRNA]</scope>
</reference>
<reference key="6">
    <citation type="journal article" date="2006" name="Plant Cell">
        <title>Endogenous and synthetic microRNAs stimulate simultaneous, efficient, and localized regulation of multiple targets in diverse species.</title>
        <authorList>
            <person name="Alvarez J.P."/>
            <person name="Pekker I."/>
            <person name="Goldshmidt A."/>
            <person name="Blum E."/>
            <person name="Amsellem Z."/>
            <person name="Eshed Y."/>
        </authorList>
    </citation>
    <scope>FUNCTION</scope>
</reference>
<reference key="7">
    <citation type="journal article" date="2008" name="Trends Plant Sci.">
        <title>The plant B3 superfamily.</title>
        <authorList>
            <person name="Swaminathan K."/>
            <person name="Peterson K."/>
            <person name="Jack T."/>
        </authorList>
    </citation>
    <scope>GENE FAMILY</scope>
</reference>
<evidence type="ECO:0000255" key="1">
    <source>
        <dbReference type="PROSITE-ProRule" id="PRU00326"/>
    </source>
</evidence>
<evidence type="ECO:0000256" key="2">
    <source>
        <dbReference type="SAM" id="MobiDB-lite"/>
    </source>
</evidence>
<evidence type="ECO:0000269" key="3">
    <source>
    </source>
</evidence>
<evidence type="ECO:0000305" key="4"/>
<dbReference type="EMBL" id="AL138642">
    <property type="protein sequence ID" value="CAB71904.1"/>
    <property type="molecule type" value="Genomic_DNA"/>
</dbReference>
<dbReference type="EMBL" id="CP002686">
    <property type="protein sequence ID" value="AEE80288.1"/>
    <property type="molecule type" value="Genomic_DNA"/>
</dbReference>
<dbReference type="EMBL" id="AK117646">
    <property type="protein sequence ID" value="BAC42301.1"/>
    <property type="molecule type" value="mRNA"/>
</dbReference>
<dbReference type="EMBL" id="BT025866">
    <property type="protein sequence ID" value="ABF85768.1"/>
    <property type="molecule type" value="mRNA"/>
</dbReference>
<dbReference type="EMBL" id="AY085197">
    <property type="protein sequence ID" value="AAM67302.1"/>
    <property type="status" value="ALT_INIT"/>
    <property type="molecule type" value="mRNA"/>
</dbReference>
<dbReference type="PIR" id="T47989">
    <property type="entry name" value="T47989"/>
</dbReference>
<dbReference type="RefSeq" id="NP_191756.1">
    <property type="nucleotide sequence ID" value="NM_116062.3"/>
</dbReference>
<dbReference type="SMR" id="Q9M268"/>
<dbReference type="BioGRID" id="10684">
    <property type="interactions" value="4"/>
</dbReference>
<dbReference type="FunCoup" id="Q9M268">
    <property type="interactions" value="82"/>
</dbReference>
<dbReference type="IntAct" id="Q9M268">
    <property type="interactions" value="6"/>
</dbReference>
<dbReference type="STRING" id="3702.Q9M268"/>
<dbReference type="PaxDb" id="3702-AT3G61970.1"/>
<dbReference type="ProteomicsDB" id="251112"/>
<dbReference type="EnsemblPlants" id="AT3G61970.1">
    <property type="protein sequence ID" value="AT3G61970.1"/>
    <property type="gene ID" value="AT3G61970"/>
</dbReference>
<dbReference type="GeneID" id="825370"/>
<dbReference type="Gramene" id="AT3G61970.1">
    <property type="protein sequence ID" value="AT3G61970.1"/>
    <property type="gene ID" value="AT3G61970"/>
</dbReference>
<dbReference type="KEGG" id="ath:AT3G61970"/>
<dbReference type="Araport" id="AT3G61970"/>
<dbReference type="TAIR" id="AT3G61970">
    <property type="gene designation" value="NGA2"/>
</dbReference>
<dbReference type="eggNOG" id="ENOG502QSHQ">
    <property type="taxonomic scope" value="Eukaryota"/>
</dbReference>
<dbReference type="HOGENOM" id="CLU_038898_3_2_1"/>
<dbReference type="InParanoid" id="Q9M268"/>
<dbReference type="OMA" id="NYETHNL"/>
<dbReference type="OrthoDB" id="2020802at2759"/>
<dbReference type="PhylomeDB" id="Q9M268"/>
<dbReference type="PRO" id="PR:Q9M268"/>
<dbReference type="Proteomes" id="UP000006548">
    <property type="component" value="Chromosome 3"/>
</dbReference>
<dbReference type="ExpressionAtlas" id="Q9M268">
    <property type="expression patterns" value="baseline and differential"/>
</dbReference>
<dbReference type="GO" id="GO:0005634">
    <property type="term" value="C:nucleus"/>
    <property type="evidence" value="ECO:0007669"/>
    <property type="project" value="UniProtKB-SubCell"/>
</dbReference>
<dbReference type="GO" id="GO:0003677">
    <property type="term" value="F:DNA binding"/>
    <property type="evidence" value="ECO:0007669"/>
    <property type="project" value="UniProtKB-KW"/>
</dbReference>
<dbReference type="GO" id="GO:0003700">
    <property type="term" value="F:DNA-binding transcription factor activity"/>
    <property type="evidence" value="ECO:0000250"/>
    <property type="project" value="TAIR"/>
</dbReference>
<dbReference type="GO" id="GO:0009908">
    <property type="term" value="P:flower development"/>
    <property type="evidence" value="ECO:0000315"/>
    <property type="project" value="TAIR"/>
</dbReference>
<dbReference type="GO" id="GO:0048366">
    <property type="term" value="P:leaf development"/>
    <property type="evidence" value="ECO:0000315"/>
    <property type="project" value="TAIR"/>
</dbReference>
<dbReference type="GO" id="GO:1901371">
    <property type="term" value="P:regulation of leaf morphogenesis"/>
    <property type="evidence" value="ECO:0000316"/>
    <property type="project" value="TAIR"/>
</dbReference>
<dbReference type="CDD" id="cd10017">
    <property type="entry name" value="B3_DNA"/>
    <property type="match status" value="1"/>
</dbReference>
<dbReference type="FunFam" id="2.40.330.10:FF:000002">
    <property type="entry name" value="B3 domain-containing protein"/>
    <property type="match status" value="1"/>
</dbReference>
<dbReference type="Gene3D" id="2.40.330.10">
    <property type="entry name" value="DNA-binding pseudobarrel domain"/>
    <property type="match status" value="1"/>
</dbReference>
<dbReference type="InterPro" id="IPR003340">
    <property type="entry name" value="B3_DNA-bd"/>
</dbReference>
<dbReference type="InterPro" id="IPR015300">
    <property type="entry name" value="DNA-bd_pseudobarrel_sf"/>
</dbReference>
<dbReference type="InterPro" id="IPR044800">
    <property type="entry name" value="LEC2-like"/>
</dbReference>
<dbReference type="PANTHER" id="PTHR31140">
    <property type="entry name" value="B3 DOMAIN-CONTAINING TRANSCRIPTION FACTOR ABI3"/>
    <property type="match status" value="1"/>
</dbReference>
<dbReference type="PANTHER" id="PTHR31140:SF2">
    <property type="entry name" value="B3 DOMAIN-CONTAINING TRANSCRIPTION FACTOR NGA2"/>
    <property type="match status" value="1"/>
</dbReference>
<dbReference type="Pfam" id="PF02362">
    <property type="entry name" value="B3"/>
    <property type="match status" value="1"/>
</dbReference>
<dbReference type="SMART" id="SM01019">
    <property type="entry name" value="B3"/>
    <property type="match status" value="1"/>
</dbReference>
<dbReference type="SUPFAM" id="SSF101936">
    <property type="entry name" value="DNA-binding pseudobarrel domain"/>
    <property type="match status" value="1"/>
</dbReference>
<dbReference type="PROSITE" id="PS50863">
    <property type="entry name" value="B3"/>
    <property type="match status" value="1"/>
</dbReference>
<gene>
    <name type="primary">NGA2</name>
    <name type="ordered locus">At3g61970</name>
    <name type="ORF">F21F14.140</name>
</gene>
<protein>
    <recommendedName>
        <fullName>B3 domain-containing transcription factor NGA2</fullName>
    </recommendedName>
    <alternativeName>
        <fullName>Protein NGATHA 2</fullName>
    </alternativeName>
</protein>
<name>NGA2_ARATH</name>
<accession>Q9M268</accession>
<accession>Q8GYG4</accession>
<accession>Q8LEW1</accession>
<feature type="chain" id="PRO_0000375092" description="B3 domain-containing transcription factor NGA2">
    <location>
        <begin position="1"/>
        <end position="299"/>
    </location>
</feature>
<feature type="DNA-binding region" description="TF-B3" evidence="1">
    <location>
        <begin position="23"/>
        <end position="129"/>
    </location>
</feature>
<feature type="region of interest" description="Disordered" evidence="2">
    <location>
        <begin position="1"/>
        <end position="21"/>
    </location>
</feature>
<feature type="region of interest" description="Disordered" evidence="2">
    <location>
        <begin position="226"/>
        <end position="249"/>
    </location>
</feature>
<feature type="sequence conflict" description="In Ref. 5; AAM67302." evidence="4" ref="5">
    <original>M</original>
    <variation>I</variation>
    <location>
        <position position="197"/>
    </location>
</feature>
<feature type="sequence conflict" description="In Ref. 5; AAM67302." evidence="4" ref="5">
    <original>I</original>
    <variation>M</variation>
    <location>
        <position position="245"/>
    </location>
</feature>
<feature type="sequence conflict" description="In Ref. 3; BAC42301." evidence="4" ref="3">
    <original>E</original>
    <variation>K</variation>
    <location>
        <position position="269"/>
    </location>
</feature>
<feature type="sequence conflict" description="In Ref. 5; AAM67302." evidence="4" ref="5">
    <original>P</original>
    <variation>S</variation>
    <location>
        <position position="291"/>
    </location>
</feature>
<comment type="function">
    <text evidence="3">Regulates lateral organ growth. Functionally redundant with NGA1, NGA3 and NGA4.</text>
</comment>
<comment type="subcellular location">
    <subcellularLocation>
        <location evidence="4">Nucleus</location>
    </subcellularLocation>
</comment>
<comment type="sequence caution" evidence="4">
    <conflict type="erroneous initiation">
        <sequence resource="EMBL-CDS" id="AAM67302"/>
    </conflict>
</comment>
<sequence>MNQEDKEKPIEEASSSMEREHMFDKVVTPSDVGKLNRLVIPKQHAERYFPLDNSTTNDSNKGLLLNFEDRSGNSWRFRYSYWNSSQSYVMTKGWSRFVKDKKLDAGDIVSFQRDSCNKDKLYIDWRRRPKIPDHHHQQFAGAMFPRFYTFPHPQMPTNYETHNLYHRFHQRDLGIGYYVRSMERSHPTAVIESVPVMMQRRAQVASMASRGEKRLRLFGVDMECGGGGGSVNSTEEESSSSGGSIPRGRVSMVGAGSLLQLRLVSSDDESLVAMEAASLEDHHFFTKKGKPSLSFDLDR</sequence>
<keyword id="KW-0238">DNA-binding</keyword>
<keyword id="KW-0539">Nucleus</keyword>
<keyword id="KW-1185">Reference proteome</keyword>
<keyword id="KW-0804">Transcription</keyword>
<keyword id="KW-0805">Transcription regulation</keyword>